<organism>
    <name type="scientific">Yersinia enterocolitica serotype O:8 / biotype 1B (strain NCTC 13174 / 8081)</name>
    <dbReference type="NCBI Taxonomy" id="393305"/>
    <lineage>
        <taxon>Bacteria</taxon>
        <taxon>Pseudomonadati</taxon>
        <taxon>Pseudomonadota</taxon>
        <taxon>Gammaproteobacteria</taxon>
        <taxon>Enterobacterales</taxon>
        <taxon>Yersiniaceae</taxon>
        <taxon>Yersinia</taxon>
    </lineage>
</organism>
<evidence type="ECO:0000255" key="1">
    <source>
        <dbReference type="HAMAP-Rule" id="MF_00129"/>
    </source>
</evidence>
<dbReference type="EMBL" id="AM286415">
    <property type="protein sequence ID" value="CAL14229.1"/>
    <property type="molecule type" value="Genomic_DNA"/>
</dbReference>
<dbReference type="RefSeq" id="WP_011817477.1">
    <property type="nucleotide sequence ID" value="NC_008800.1"/>
</dbReference>
<dbReference type="RefSeq" id="YP_001008347.1">
    <property type="nucleotide sequence ID" value="NC_008800.1"/>
</dbReference>
<dbReference type="SMR" id="A1JTD9"/>
<dbReference type="KEGG" id="yen:YE4215"/>
<dbReference type="PATRIC" id="fig|393305.7.peg.4483"/>
<dbReference type="eggNOG" id="COG0445">
    <property type="taxonomic scope" value="Bacteria"/>
</dbReference>
<dbReference type="HOGENOM" id="CLU_007831_2_2_6"/>
<dbReference type="OrthoDB" id="9815560at2"/>
<dbReference type="Proteomes" id="UP000000642">
    <property type="component" value="Chromosome"/>
</dbReference>
<dbReference type="GO" id="GO:0005829">
    <property type="term" value="C:cytosol"/>
    <property type="evidence" value="ECO:0007669"/>
    <property type="project" value="TreeGrafter"/>
</dbReference>
<dbReference type="GO" id="GO:0050660">
    <property type="term" value="F:flavin adenine dinucleotide binding"/>
    <property type="evidence" value="ECO:0007669"/>
    <property type="project" value="UniProtKB-UniRule"/>
</dbReference>
<dbReference type="GO" id="GO:0030488">
    <property type="term" value="P:tRNA methylation"/>
    <property type="evidence" value="ECO:0007669"/>
    <property type="project" value="TreeGrafter"/>
</dbReference>
<dbReference type="GO" id="GO:0002098">
    <property type="term" value="P:tRNA wobble uridine modification"/>
    <property type="evidence" value="ECO:0007669"/>
    <property type="project" value="InterPro"/>
</dbReference>
<dbReference type="FunFam" id="1.10.10.1800:FF:000001">
    <property type="entry name" value="tRNA uridine 5-carboxymethylaminomethyl modification enzyme MnmG"/>
    <property type="match status" value="1"/>
</dbReference>
<dbReference type="FunFam" id="1.10.150.570:FF:000001">
    <property type="entry name" value="tRNA uridine 5-carboxymethylaminomethyl modification enzyme MnmG"/>
    <property type="match status" value="1"/>
</dbReference>
<dbReference type="FunFam" id="3.50.50.60:FF:000002">
    <property type="entry name" value="tRNA uridine 5-carboxymethylaminomethyl modification enzyme MnmG"/>
    <property type="match status" value="1"/>
</dbReference>
<dbReference type="FunFam" id="3.50.50.60:FF:000010">
    <property type="entry name" value="tRNA uridine 5-carboxymethylaminomethyl modification enzyme MnmG"/>
    <property type="match status" value="1"/>
</dbReference>
<dbReference type="Gene3D" id="3.50.50.60">
    <property type="entry name" value="FAD/NAD(P)-binding domain"/>
    <property type="match status" value="2"/>
</dbReference>
<dbReference type="Gene3D" id="1.10.150.570">
    <property type="entry name" value="GidA associated domain, C-terminal subdomain"/>
    <property type="match status" value="1"/>
</dbReference>
<dbReference type="Gene3D" id="1.10.10.1800">
    <property type="entry name" value="tRNA uridine 5-carboxymethylaminomethyl modification enzyme MnmG/GidA"/>
    <property type="match status" value="1"/>
</dbReference>
<dbReference type="HAMAP" id="MF_00129">
    <property type="entry name" value="MnmG_GidA"/>
    <property type="match status" value="1"/>
</dbReference>
<dbReference type="InterPro" id="IPR036188">
    <property type="entry name" value="FAD/NAD-bd_sf"/>
</dbReference>
<dbReference type="InterPro" id="IPR049312">
    <property type="entry name" value="GIDA_C_N"/>
</dbReference>
<dbReference type="InterPro" id="IPR004416">
    <property type="entry name" value="MnmG"/>
</dbReference>
<dbReference type="InterPro" id="IPR002218">
    <property type="entry name" value="MnmG-rel"/>
</dbReference>
<dbReference type="InterPro" id="IPR020595">
    <property type="entry name" value="MnmG-rel_CS"/>
</dbReference>
<dbReference type="InterPro" id="IPR026904">
    <property type="entry name" value="MnmG_C"/>
</dbReference>
<dbReference type="InterPro" id="IPR047001">
    <property type="entry name" value="MnmG_C_subdom"/>
</dbReference>
<dbReference type="InterPro" id="IPR044920">
    <property type="entry name" value="MnmG_C_subdom_sf"/>
</dbReference>
<dbReference type="InterPro" id="IPR040131">
    <property type="entry name" value="MnmG_N"/>
</dbReference>
<dbReference type="NCBIfam" id="TIGR00136">
    <property type="entry name" value="mnmG_gidA"/>
    <property type="match status" value="1"/>
</dbReference>
<dbReference type="PANTHER" id="PTHR11806">
    <property type="entry name" value="GLUCOSE INHIBITED DIVISION PROTEIN A"/>
    <property type="match status" value="1"/>
</dbReference>
<dbReference type="PANTHER" id="PTHR11806:SF0">
    <property type="entry name" value="PROTEIN MTO1 HOMOLOG, MITOCHONDRIAL"/>
    <property type="match status" value="1"/>
</dbReference>
<dbReference type="Pfam" id="PF01134">
    <property type="entry name" value="GIDA"/>
    <property type="match status" value="1"/>
</dbReference>
<dbReference type="Pfam" id="PF21680">
    <property type="entry name" value="GIDA_C_1st"/>
    <property type="match status" value="1"/>
</dbReference>
<dbReference type="Pfam" id="PF13932">
    <property type="entry name" value="SAM_GIDA_C"/>
    <property type="match status" value="1"/>
</dbReference>
<dbReference type="SMART" id="SM01228">
    <property type="entry name" value="GIDA_assoc_3"/>
    <property type="match status" value="1"/>
</dbReference>
<dbReference type="SUPFAM" id="SSF51905">
    <property type="entry name" value="FAD/NAD(P)-binding domain"/>
    <property type="match status" value="1"/>
</dbReference>
<dbReference type="PROSITE" id="PS01280">
    <property type="entry name" value="GIDA_1"/>
    <property type="match status" value="1"/>
</dbReference>
<dbReference type="PROSITE" id="PS01281">
    <property type="entry name" value="GIDA_2"/>
    <property type="match status" value="1"/>
</dbReference>
<reference key="1">
    <citation type="journal article" date="2006" name="PLoS Genet.">
        <title>The complete genome sequence and comparative genome analysis of the high pathogenicity Yersinia enterocolitica strain 8081.</title>
        <authorList>
            <person name="Thomson N.R."/>
            <person name="Howard S."/>
            <person name="Wren B.W."/>
            <person name="Holden M.T.G."/>
            <person name="Crossman L."/>
            <person name="Challis G.L."/>
            <person name="Churcher C."/>
            <person name="Mungall K."/>
            <person name="Brooks K."/>
            <person name="Chillingworth T."/>
            <person name="Feltwell T."/>
            <person name="Abdellah Z."/>
            <person name="Hauser H."/>
            <person name="Jagels K."/>
            <person name="Maddison M."/>
            <person name="Moule S."/>
            <person name="Sanders M."/>
            <person name="Whitehead S."/>
            <person name="Quail M.A."/>
            <person name="Dougan G."/>
            <person name="Parkhill J."/>
            <person name="Prentice M.B."/>
        </authorList>
    </citation>
    <scope>NUCLEOTIDE SEQUENCE [LARGE SCALE GENOMIC DNA]</scope>
    <source>
        <strain>NCTC 13174 / 8081</strain>
    </source>
</reference>
<name>MNMG_YERE8</name>
<protein>
    <recommendedName>
        <fullName evidence="1">tRNA uridine 5-carboxymethylaminomethyl modification enzyme MnmG</fullName>
    </recommendedName>
    <alternativeName>
        <fullName evidence="1">Glucose-inhibited division protein A</fullName>
    </alternativeName>
</protein>
<keyword id="KW-0963">Cytoplasm</keyword>
<keyword id="KW-0274">FAD</keyword>
<keyword id="KW-0285">Flavoprotein</keyword>
<keyword id="KW-0520">NAD</keyword>
<keyword id="KW-0819">tRNA processing</keyword>
<sequence>MFYPDQFDVIIIGGGHAGTEAAMAAARMGRQTLLLTHNIDTLGQMSCNPAIGGIGKGHLVKEIDALGGLMAMATDQAGIQFRILNASKGPAVRATRAQADRVLYRQAVRTALENQPNLMIFQQPVEDLIVENDRVVGAVTKMGLKFRAKAVVLTVGTFLDGKIHIGLENYSGGRAGDPPSISLSQRLRELPLRVNRLKTGTPPRIDARTIDFSQLAPQLGDTPIPVFSFLGNASQHPEQMACHITYTNEKTHEVIRNNLDRSPMYAGIIEGIGPRYCPSIEDKVMRFADRNSHQIFLEPEGLTSNEIYPNGISTSLPFDVQMQIVRSMKGLENARIVRPGYAIEYDFFDPRDLKPTLESKYIQGLFFAGQINGTTGYEEAAAQGLLAGLNAGRFANDEDGWSPRRDEAYLGVLVDDLSTLGTKEPYRMFTSRAEYRLMLREDNADLRLTEMGRKLGLVDDARWAHFSQKIEQIEKERQRLRDIWVHPHSENVAEINAVLKAPLSKEANGEELLRRPEIDYRLLTTLPSFGPALTDPQAADQVEIQVKYEGYIARQQEEIEKQLRNENTLLPADLDYRQVSGLSNEVIAKLNDHKPNSIGQASRISGITPAAISILLVWLKKQGLLRRSA</sequence>
<gene>
    <name evidence="1" type="primary">mnmG</name>
    <name evidence="1" type="synonym">gidA</name>
    <name type="ordered locus">YE4215</name>
</gene>
<feature type="chain" id="PRO_1000016710" description="tRNA uridine 5-carboxymethylaminomethyl modification enzyme MnmG">
    <location>
        <begin position="1"/>
        <end position="629"/>
    </location>
</feature>
<feature type="binding site" evidence="1">
    <location>
        <begin position="13"/>
        <end position="18"/>
    </location>
    <ligand>
        <name>FAD</name>
        <dbReference type="ChEBI" id="CHEBI:57692"/>
    </ligand>
</feature>
<feature type="binding site" evidence="1">
    <location>
        <position position="125"/>
    </location>
    <ligand>
        <name>FAD</name>
        <dbReference type="ChEBI" id="CHEBI:57692"/>
    </ligand>
</feature>
<feature type="binding site" evidence="1">
    <location>
        <position position="180"/>
    </location>
    <ligand>
        <name>FAD</name>
        <dbReference type="ChEBI" id="CHEBI:57692"/>
    </ligand>
</feature>
<feature type="binding site" evidence="1">
    <location>
        <begin position="273"/>
        <end position="287"/>
    </location>
    <ligand>
        <name>NAD(+)</name>
        <dbReference type="ChEBI" id="CHEBI:57540"/>
    </ligand>
</feature>
<feature type="binding site" evidence="1">
    <location>
        <position position="370"/>
    </location>
    <ligand>
        <name>FAD</name>
        <dbReference type="ChEBI" id="CHEBI:57692"/>
    </ligand>
</feature>
<proteinExistence type="inferred from homology"/>
<accession>A1JTD9</accession>
<comment type="function">
    <text evidence="1">NAD-binding protein involved in the addition of a carboxymethylaminomethyl (cmnm) group at the wobble position (U34) of certain tRNAs, forming tRNA-cmnm(5)s(2)U34.</text>
</comment>
<comment type="cofactor">
    <cofactor evidence="1">
        <name>FAD</name>
        <dbReference type="ChEBI" id="CHEBI:57692"/>
    </cofactor>
</comment>
<comment type="subunit">
    <text evidence="1">Homodimer. Heterotetramer of two MnmE and two MnmG subunits.</text>
</comment>
<comment type="subcellular location">
    <subcellularLocation>
        <location evidence="1">Cytoplasm</location>
    </subcellularLocation>
</comment>
<comment type="similarity">
    <text evidence="1">Belongs to the MnmG family.</text>
</comment>